<evidence type="ECO:0000255" key="1">
    <source>
        <dbReference type="HAMAP-Rule" id="MF_00083"/>
    </source>
</evidence>
<sequence length="190" mass="21615">MKCIVGLGNIGKRFELTRHNIGFEVIDYILKKHNFSLDKQKFKGAYTIERLNGDKVLFIEPMTMMNLSGEAVGPLMDYYNVEVEDLIVLYDDLDLSQGQIRLRQKGSAGGHNGMKSIIKHLGTDQFKRIRIGVGRPTNGMSVPDYVLQKFSKEEMITMDKVIEHSAHAVEAFIESSRFDHVMNQYNGEVN</sequence>
<feature type="chain" id="PRO_0000264115" description="Peptidyl-tRNA hydrolase">
    <location>
        <begin position="1"/>
        <end position="190"/>
    </location>
</feature>
<feature type="active site" description="Proton acceptor" evidence="1">
    <location>
        <position position="19"/>
    </location>
</feature>
<feature type="binding site" evidence="1">
    <location>
        <position position="14"/>
    </location>
    <ligand>
        <name>tRNA</name>
        <dbReference type="ChEBI" id="CHEBI:17843"/>
    </ligand>
</feature>
<feature type="binding site" evidence="1">
    <location>
        <position position="64"/>
    </location>
    <ligand>
        <name>tRNA</name>
        <dbReference type="ChEBI" id="CHEBI:17843"/>
    </ligand>
</feature>
<feature type="binding site" evidence="1">
    <location>
        <position position="66"/>
    </location>
    <ligand>
        <name>tRNA</name>
        <dbReference type="ChEBI" id="CHEBI:17843"/>
    </ligand>
</feature>
<feature type="binding site" evidence="1">
    <location>
        <position position="112"/>
    </location>
    <ligand>
        <name>tRNA</name>
        <dbReference type="ChEBI" id="CHEBI:17843"/>
    </ligand>
</feature>
<feature type="site" description="Discriminates between blocked and unblocked aminoacyl-tRNA" evidence="1">
    <location>
        <position position="9"/>
    </location>
</feature>
<feature type="site" description="Stabilizes the basic form of H active site to accept a proton" evidence="1">
    <location>
        <position position="91"/>
    </location>
</feature>
<comment type="function">
    <text evidence="1">Hydrolyzes ribosome-free peptidyl-tRNAs (with 1 or more amino acids incorporated), which drop off the ribosome during protein synthesis, or as a result of ribosome stalling.</text>
</comment>
<comment type="function">
    <text evidence="1">Catalyzes the release of premature peptidyl moieties from peptidyl-tRNA molecules trapped in stalled 50S ribosomal subunits, and thus maintains levels of free tRNAs and 50S ribosomes.</text>
</comment>
<comment type="catalytic activity">
    <reaction evidence="1">
        <text>an N-acyl-L-alpha-aminoacyl-tRNA + H2O = an N-acyl-L-amino acid + a tRNA + H(+)</text>
        <dbReference type="Rhea" id="RHEA:54448"/>
        <dbReference type="Rhea" id="RHEA-COMP:10123"/>
        <dbReference type="Rhea" id="RHEA-COMP:13883"/>
        <dbReference type="ChEBI" id="CHEBI:15377"/>
        <dbReference type="ChEBI" id="CHEBI:15378"/>
        <dbReference type="ChEBI" id="CHEBI:59874"/>
        <dbReference type="ChEBI" id="CHEBI:78442"/>
        <dbReference type="ChEBI" id="CHEBI:138191"/>
        <dbReference type="EC" id="3.1.1.29"/>
    </reaction>
</comment>
<comment type="subunit">
    <text evidence="1">Monomer.</text>
</comment>
<comment type="subcellular location">
    <subcellularLocation>
        <location evidence="1">Cytoplasm</location>
    </subcellularLocation>
</comment>
<comment type="similarity">
    <text evidence="1">Belongs to the PTH family.</text>
</comment>
<proteinExistence type="inferred from homology"/>
<protein>
    <recommendedName>
        <fullName evidence="1">Peptidyl-tRNA hydrolase</fullName>
        <shortName evidence="1">Pth</shortName>
        <ecNumber evidence="1">3.1.1.29</ecNumber>
    </recommendedName>
</protein>
<name>PTH_STAHJ</name>
<reference key="1">
    <citation type="journal article" date="2005" name="J. Bacteriol.">
        <title>Whole-genome sequencing of Staphylococcus haemolyticus uncovers the extreme plasticity of its genome and the evolution of human-colonizing staphylococcal species.</title>
        <authorList>
            <person name="Takeuchi F."/>
            <person name="Watanabe S."/>
            <person name="Baba T."/>
            <person name="Yuzawa H."/>
            <person name="Ito T."/>
            <person name="Morimoto Y."/>
            <person name="Kuroda M."/>
            <person name="Cui L."/>
            <person name="Takahashi M."/>
            <person name="Ankai A."/>
            <person name="Baba S."/>
            <person name="Fukui S."/>
            <person name="Lee J.C."/>
            <person name="Hiramatsu K."/>
        </authorList>
    </citation>
    <scope>NUCLEOTIDE SEQUENCE [LARGE SCALE GENOMIC DNA]</scope>
    <source>
        <strain>JCSC1435</strain>
    </source>
</reference>
<organism>
    <name type="scientific">Staphylococcus haemolyticus (strain JCSC1435)</name>
    <dbReference type="NCBI Taxonomy" id="279808"/>
    <lineage>
        <taxon>Bacteria</taxon>
        <taxon>Bacillati</taxon>
        <taxon>Bacillota</taxon>
        <taxon>Bacilli</taxon>
        <taxon>Bacillales</taxon>
        <taxon>Staphylococcaceae</taxon>
        <taxon>Staphylococcus</taxon>
    </lineage>
</organism>
<accession>Q4L3F9</accession>
<keyword id="KW-0963">Cytoplasm</keyword>
<keyword id="KW-0378">Hydrolase</keyword>
<keyword id="KW-0694">RNA-binding</keyword>
<keyword id="KW-0820">tRNA-binding</keyword>
<gene>
    <name evidence="1" type="primary">pth</name>
    <name type="ordered locus">SH2509</name>
</gene>
<dbReference type="EC" id="3.1.1.29" evidence="1"/>
<dbReference type="EMBL" id="AP006716">
    <property type="protein sequence ID" value="BAE05818.1"/>
    <property type="molecule type" value="Genomic_DNA"/>
</dbReference>
<dbReference type="RefSeq" id="WP_011276759.1">
    <property type="nucleotide sequence ID" value="NC_007168.1"/>
</dbReference>
<dbReference type="SMR" id="Q4L3F9"/>
<dbReference type="GeneID" id="93781738"/>
<dbReference type="KEGG" id="sha:SH2509"/>
<dbReference type="eggNOG" id="COG0193">
    <property type="taxonomic scope" value="Bacteria"/>
</dbReference>
<dbReference type="HOGENOM" id="CLU_062456_4_1_9"/>
<dbReference type="OrthoDB" id="9800507at2"/>
<dbReference type="Proteomes" id="UP000000543">
    <property type="component" value="Chromosome"/>
</dbReference>
<dbReference type="GO" id="GO:0005737">
    <property type="term" value="C:cytoplasm"/>
    <property type="evidence" value="ECO:0007669"/>
    <property type="project" value="UniProtKB-SubCell"/>
</dbReference>
<dbReference type="GO" id="GO:0004045">
    <property type="term" value="F:peptidyl-tRNA hydrolase activity"/>
    <property type="evidence" value="ECO:0007669"/>
    <property type="project" value="UniProtKB-UniRule"/>
</dbReference>
<dbReference type="GO" id="GO:0000049">
    <property type="term" value="F:tRNA binding"/>
    <property type="evidence" value="ECO:0007669"/>
    <property type="project" value="UniProtKB-UniRule"/>
</dbReference>
<dbReference type="GO" id="GO:0006515">
    <property type="term" value="P:protein quality control for misfolded or incompletely synthesized proteins"/>
    <property type="evidence" value="ECO:0007669"/>
    <property type="project" value="UniProtKB-UniRule"/>
</dbReference>
<dbReference type="GO" id="GO:0072344">
    <property type="term" value="P:rescue of stalled ribosome"/>
    <property type="evidence" value="ECO:0007669"/>
    <property type="project" value="UniProtKB-UniRule"/>
</dbReference>
<dbReference type="CDD" id="cd00462">
    <property type="entry name" value="PTH"/>
    <property type="match status" value="1"/>
</dbReference>
<dbReference type="FunFam" id="3.40.50.1470:FF:000001">
    <property type="entry name" value="Peptidyl-tRNA hydrolase"/>
    <property type="match status" value="1"/>
</dbReference>
<dbReference type="Gene3D" id="3.40.50.1470">
    <property type="entry name" value="Peptidyl-tRNA hydrolase"/>
    <property type="match status" value="1"/>
</dbReference>
<dbReference type="HAMAP" id="MF_00083">
    <property type="entry name" value="Pept_tRNA_hydro_bact"/>
    <property type="match status" value="1"/>
</dbReference>
<dbReference type="InterPro" id="IPR001328">
    <property type="entry name" value="Pept_tRNA_hydro"/>
</dbReference>
<dbReference type="InterPro" id="IPR018171">
    <property type="entry name" value="Pept_tRNA_hydro_CS"/>
</dbReference>
<dbReference type="InterPro" id="IPR036416">
    <property type="entry name" value="Pept_tRNA_hydro_sf"/>
</dbReference>
<dbReference type="NCBIfam" id="TIGR00447">
    <property type="entry name" value="pth"/>
    <property type="match status" value="1"/>
</dbReference>
<dbReference type="PANTHER" id="PTHR17224">
    <property type="entry name" value="PEPTIDYL-TRNA HYDROLASE"/>
    <property type="match status" value="1"/>
</dbReference>
<dbReference type="PANTHER" id="PTHR17224:SF1">
    <property type="entry name" value="PEPTIDYL-TRNA HYDROLASE"/>
    <property type="match status" value="1"/>
</dbReference>
<dbReference type="Pfam" id="PF01195">
    <property type="entry name" value="Pept_tRNA_hydro"/>
    <property type="match status" value="1"/>
</dbReference>
<dbReference type="SUPFAM" id="SSF53178">
    <property type="entry name" value="Peptidyl-tRNA hydrolase-like"/>
    <property type="match status" value="1"/>
</dbReference>
<dbReference type="PROSITE" id="PS01195">
    <property type="entry name" value="PEPT_TRNA_HYDROL_1"/>
    <property type="match status" value="1"/>
</dbReference>
<dbReference type="PROSITE" id="PS01196">
    <property type="entry name" value="PEPT_TRNA_HYDROL_2"/>
    <property type="match status" value="1"/>
</dbReference>